<name>ATPL_SYNR3</name>
<keyword id="KW-0066">ATP synthesis</keyword>
<keyword id="KW-0138">CF(0)</keyword>
<keyword id="KW-0375">Hydrogen ion transport</keyword>
<keyword id="KW-0406">Ion transport</keyword>
<keyword id="KW-0446">Lipid-binding</keyword>
<keyword id="KW-0472">Membrane</keyword>
<keyword id="KW-1185">Reference proteome</keyword>
<keyword id="KW-0793">Thylakoid</keyword>
<keyword id="KW-0812">Transmembrane</keyword>
<keyword id="KW-1133">Transmembrane helix</keyword>
<keyword id="KW-0813">Transport</keyword>
<protein>
    <recommendedName>
        <fullName evidence="1">ATP synthase subunit c</fullName>
    </recommendedName>
    <alternativeName>
        <fullName evidence="1">ATP synthase F(0) sector subunit c</fullName>
    </alternativeName>
    <alternativeName>
        <fullName evidence="1">F-type ATPase subunit c</fullName>
        <shortName evidence="1">F-ATPase subunit c</shortName>
    </alternativeName>
    <alternativeName>
        <fullName evidence="1">Lipid-binding protein</fullName>
    </alternativeName>
</protein>
<comment type="function">
    <text evidence="1">F(1)F(0) ATP synthase produces ATP from ADP in the presence of a proton or sodium gradient. F-type ATPases consist of two structural domains, F(1) containing the extramembraneous catalytic core and F(0) containing the membrane proton channel, linked together by a central stalk and a peripheral stalk. During catalysis, ATP synthesis in the catalytic domain of F(1) is coupled via a rotary mechanism of the central stalk subunits to proton translocation.</text>
</comment>
<comment type="function">
    <text evidence="1">Key component of the F(0) channel; it plays a direct role in translocation across the membrane. A homomeric c-ring of between 10-14 subunits forms the central stalk rotor element with the F(1) delta and epsilon subunits.</text>
</comment>
<comment type="subunit">
    <text evidence="1">F-type ATPases have 2 components, F(1) - the catalytic core - and F(0) - the membrane proton channel. F(1) has five subunits: alpha(3), beta(3), gamma(1), delta(1), epsilon(1). F(0) has four main subunits: a(1), b(1), b'(1) and c(10-14). The alpha and beta chains form an alternating ring which encloses part of the gamma chain. F(1) is attached to F(0) by a central stalk formed by the gamma and epsilon chains, while a peripheral stalk is formed by the delta, b and b' chains.</text>
</comment>
<comment type="subcellular location">
    <subcellularLocation>
        <location evidence="1">Cellular thylakoid membrane</location>
        <topology evidence="1">Multi-pass membrane protein</topology>
    </subcellularLocation>
</comment>
<comment type="similarity">
    <text evidence="1">Belongs to the ATPase C chain family.</text>
</comment>
<feature type="chain" id="PRO_0000365930" description="ATP synthase subunit c">
    <location>
        <begin position="1"/>
        <end position="82"/>
    </location>
</feature>
<feature type="transmembrane region" description="Helical" evidence="1">
    <location>
        <begin position="7"/>
        <end position="27"/>
    </location>
</feature>
<feature type="transmembrane region" description="Helical" evidence="1">
    <location>
        <begin position="57"/>
        <end position="77"/>
    </location>
</feature>
<feature type="site" description="Reversibly protonated during proton transport" evidence="1">
    <location>
        <position position="61"/>
    </location>
</feature>
<gene>
    <name evidence="1" type="primary">atpE</name>
    <name evidence="1" type="synonym">atpH</name>
    <name type="ordered locus">SynRCC307_1882</name>
</gene>
<reference key="1">
    <citation type="submission" date="2006-05" db="EMBL/GenBank/DDBJ databases">
        <authorList>
            <consortium name="Genoscope"/>
        </authorList>
    </citation>
    <scope>NUCLEOTIDE SEQUENCE [LARGE SCALE GENOMIC DNA]</scope>
    <source>
        <strain>RCC307</strain>
    </source>
</reference>
<dbReference type="EMBL" id="CT978603">
    <property type="protein sequence ID" value="CAK28785.1"/>
    <property type="molecule type" value="Genomic_DNA"/>
</dbReference>
<dbReference type="SMR" id="A5GV76"/>
<dbReference type="STRING" id="316278.SynRCC307_1882"/>
<dbReference type="KEGG" id="syr:SynRCC307_1882"/>
<dbReference type="eggNOG" id="COG0636">
    <property type="taxonomic scope" value="Bacteria"/>
</dbReference>
<dbReference type="HOGENOM" id="CLU_148047_2_0_3"/>
<dbReference type="OrthoDB" id="9810379at2"/>
<dbReference type="Proteomes" id="UP000001115">
    <property type="component" value="Chromosome"/>
</dbReference>
<dbReference type="GO" id="GO:0031676">
    <property type="term" value="C:plasma membrane-derived thylakoid membrane"/>
    <property type="evidence" value="ECO:0007669"/>
    <property type="project" value="UniProtKB-SubCell"/>
</dbReference>
<dbReference type="GO" id="GO:0045259">
    <property type="term" value="C:proton-transporting ATP synthase complex"/>
    <property type="evidence" value="ECO:0007669"/>
    <property type="project" value="UniProtKB-KW"/>
</dbReference>
<dbReference type="GO" id="GO:0033177">
    <property type="term" value="C:proton-transporting two-sector ATPase complex, proton-transporting domain"/>
    <property type="evidence" value="ECO:0007669"/>
    <property type="project" value="InterPro"/>
</dbReference>
<dbReference type="GO" id="GO:0008289">
    <property type="term" value="F:lipid binding"/>
    <property type="evidence" value="ECO:0007669"/>
    <property type="project" value="UniProtKB-KW"/>
</dbReference>
<dbReference type="GO" id="GO:0046933">
    <property type="term" value="F:proton-transporting ATP synthase activity, rotational mechanism"/>
    <property type="evidence" value="ECO:0007669"/>
    <property type="project" value="UniProtKB-UniRule"/>
</dbReference>
<dbReference type="CDD" id="cd18183">
    <property type="entry name" value="ATP-synt_Fo_c_ATPH"/>
    <property type="match status" value="1"/>
</dbReference>
<dbReference type="FunFam" id="1.20.20.10:FF:000001">
    <property type="entry name" value="ATP synthase subunit c, chloroplastic"/>
    <property type="match status" value="1"/>
</dbReference>
<dbReference type="Gene3D" id="1.20.20.10">
    <property type="entry name" value="F1F0 ATP synthase subunit C"/>
    <property type="match status" value="1"/>
</dbReference>
<dbReference type="HAMAP" id="MF_01396">
    <property type="entry name" value="ATP_synth_c_bact"/>
    <property type="match status" value="1"/>
</dbReference>
<dbReference type="InterPro" id="IPR005953">
    <property type="entry name" value="ATP_synth_csu_bac/chlpt"/>
</dbReference>
<dbReference type="InterPro" id="IPR000454">
    <property type="entry name" value="ATP_synth_F0_csu"/>
</dbReference>
<dbReference type="InterPro" id="IPR020537">
    <property type="entry name" value="ATP_synth_F0_csu_DDCD_BS"/>
</dbReference>
<dbReference type="InterPro" id="IPR038662">
    <property type="entry name" value="ATP_synth_F0_csu_sf"/>
</dbReference>
<dbReference type="InterPro" id="IPR002379">
    <property type="entry name" value="ATPase_proteolipid_c-like_dom"/>
</dbReference>
<dbReference type="InterPro" id="IPR035921">
    <property type="entry name" value="F/V-ATP_Csub_sf"/>
</dbReference>
<dbReference type="NCBIfam" id="TIGR01260">
    <property type="entry name" value="ATP_synt_c"/>
    <property type="match status" value="1"/>
</dbReference>
<dbReference type="NCBIfam" id="NF005608">
    <property type="entry name" value="PRK07354.1"/>
    <property type="match status" value="1"/>
</dbReference>
<dbReference type="PANTHER" id="PTHR10031">
    <property type="entry name" value="ATP SYNTHASE LIPID-BINDING PROTEIN, MITOCHONDRIAL"/>
    <property type="match status" value="1"/>
</dbReference>
<dbReference type="PANTHER" id="PTHR10031:SF0">
    <property type="entry name" value="ATPASE PROTEIN 9"/>
    <property type="match status" value="1"/>
</dbReference>
<dbReference type="Pfam" id="PF00137">
    <property type="entry name" value="ATP-synt_C"/>
    <property type="match status" value="1"/>
</dbReference>
<dbReference type="PRINTS" id="PR00124">
    <property type="entry name" value="ATPASEC"/>
</dbReference>
<dbReference type="SUPFAM" id="SSF81333">
    <property type="entry name" value="F1F0 ATP synthase subunit C"/>
    <property type="match status" value="1"/>
</dbReference>
<dbReference type="PROSITE" id="PS00605">
    <property type="entry name" value="ATPASE_C"/>
    <property type="match status" value="1"/>
</dbReference>
<evidence type="ECO:0000255" key="1">
    <source>
        <dbReference type="HAMAP-Rule" id="MF_01396"/>
    </source>
</evidence>
<organism>
    <name type="scientific">Synechococcus sp. (strain RCC307)</name>
    <dbReference type="NCBI Taxonomy" id="316278"/>
    <lineage>
        <taxon>Bacteria</taxon>
        <taxon>Bacillati</taxon>
        <taxon>Cyanobacteriota</taxon>
        <taxon>Cyanophyceae</taxon>
        <taxon>Synechococcales</taxon>
        <taxon>Synechococcaceae</taxon>
        <taxon>Synechococcus</taxon>
    </lineage>
</organism>
<proteinExistence type="inferred from homology"/>
<sequence length="82" mass="7971">MDSITSAASVVAAGLAVGLAAIGPGIGQGTASGGAVEGIARQPEAEGKIRGTLLLSLAFMESLTIYGLVVALVLLFANPFAG</sequence>
<accession>A5GV76</accession>